<name>CH60_BIFAS</name>
<proteinExistence type="inferred from homology"/>
<feature type="chain" id="PRO_0000063287" description="Chaperonin GroEL">
    <location>
        <begin position="1"/>
        <end position="537"/>
    </location>
</feature>
<feature type="binding site" evidence="1">
    <location>
        <begin position="29"/>
        <end position="32"/>
    </location>
    <ligand>
        <name>ATP</name>
        <dbReference type="ChEBI" id="CHEBI:30616"/>
    </ligand>
</feature>
<feature type="binding site" evidence="1">
    <location>
        <begin position="86"/>
        <end position="90"/>
    </location>
    <ligand>
        <name>ATP</name>
        <dbReference type="ChEBI" id="CHEBI:30616"/>
    </ligand>
</feature>
<feature type="binding site" evidence="1">
    <location>
        <position position="413"/>
    </location>
    <ligand>
        <name>ATP</name>
        <dbReference type="ChEBI" id="CHEBI:30616"/>
    </ligand>
</feature>
<feature type="binding site" evidence="1">
    <location>
        <begin position="477"/>
        <end position="479"/>
    </location>
    <ligand>
        <name>ATP</name>
        <dbReference type="ChEBI" id="CHEBI:30616"/>
    </ligand>
</feature>
<feature type="binding site" evidence="1">
    <location>
        <position position="493"/>
    </location>
    <ligand>
        <name>ATP</name>
        <dbReference type="ChEBI" id="CHEBI:30616"/>
    </ligand>
</feature>
<feature type="sequence conflict" description="In Ref. 1; AAF89507." evidence="2" ref="1">
    <original>I</original>
    <variation>T</variation>
    <location>
        <position position="394"/>
    </location>
</feature>
<feature type="sequence conflict" description="In Ref. 1; AAF89507." evidence="2" ref="1">
    <original>QD</original>
    <variation>HN</variation>
    <location>
        <begin position="533"/>
        <end position="534"/>
    </location>
</feature>
<protein>
    <recommendedName>
        <fullName evidence="1">Chaperonin GroEL</fullName>
        <ecNumber evidence="1">5.6.1.7</ecNumber>
    </recommendedName>
    <alternativeName>
        <fullName evidence="1">60 kDa chaperonin</fullName>
    </alternativeName>
    <alternativeName>
        <fullName evidence="1">Chaperonin-60</fullName>
        <shortName evidence="1">Cpn60</shortName>
    </alternativeName>
</protein>
<keyword id="KW-0067">ATP-binding</keyword>
<keyword id="KW-0143">Chaperone</keyword>
<keyword id="KW-0963">Cytoplasm</keyword>
<keyword id="KW-0413">Isomerase</keyword>
<keyword id="KW-0547">Nucleotide-binding</keyword>
<organism>
    <name type="scientific">Bifidobacterium animalis subsp. lactis (strain DSM 10140 / CCUG 37979 / JCM 10602 / LMG 18314 / NRRL B-41405 / UR1)</name>
    <dbReference type="NCBI Taxonomy" id="555970"/>
    <lineage>
        <taxon>Bacteria</taxon>
        <taxon>Bacillati</taxon>
        <taxon>Actinomycetota</taxon>
        <taxon>Actinomycetes</taxon>
        <taxon>Bifidobacteriales</taxon>
        <taxon>Bifidobacteriaceae</taxon>
        <taxon>Bifidobacterium</taxon>
    </lineage>
</organism>
<dbReference type="EC" id="5.6.1.7" evidence="1"/>
<dbReference type="EMBL" id="AY004282">
    <property type="protein sequence ID" value="AAF89507.2"/>
    <property type="molecule type" value="Genomic_DNA"/>
</dbReference>
<dbReference type="EMBL" id="CP001606">
    <property type="protein sequence ID" value="ACS47596.1"/>
    <property type="molecule type" value="Genomic_DNA"/>
</dbReference>
<dbReference type="RefSeq" id="WP_004218937.1">
    <property type="nucleotide sequence ID" value="NC_012815.1"/>
</dbReference>
<dbReference type="SMR" id="Q93M78"/>
<dbReference type="GeneID" id="29696381"/>
<dbReference type="KEGG" id="blt:Balat_0656"/>
<dbReference type="HOGENOM" id="CLU_016503_3_0_11"/>
<dbReference type="BioCyc" id="BANI555970:G1GVE-677-MONOMER"/>
<dbReference type="GO" id="GO:0005737">
    <property type="term" value="C:cytoplasm"/>
    <property type="evidence" value="ECO:0007669"/>
    <property type="project" value="UniProtKB-SubCell"/>
</dbReference>
<dbReference type="GO" id="GO:0005524">
    <property type="term" value="F:ATP binding"/>
    <property type="evidence" value="ECO:0007669"/>
    <property type="project" value="UniProtKB-UniRule"/>
</dbReference>
<dbReference type="GO" id="GO:0140662">
    <property type="term" value="F:ATP-dependent protein folding chaperone"/>
    <property type="evidence" value="ECO:0007669"/>
    <property type="project" value="InterPro"/>
</dbReference>
<dbReference type="GO" id="GO:0016853">
    <property type="term" value="F:isomerase activity"/>
    <property type="evidence" value="ECO:0007669"/>
    <property type="project" value="UniProtKB-KW"/>
</dbReference>
<dbReference type="GO" id="GO:0051082">
    <property type="term" value="F:unfolded protein binding"/>
    <property type="evidence" value="ECO:0007669"/>
    <property type="project" value="UniProtKB-UniRule"/>
</dbReference>
<dbReference type="GO" id="GO:0042026">
    <property type="term" value="P:protein refolding"/>
    <property type="evidence" value="ECO:0007669"/>
    <property type="project" value="UniProtKB-UniRule"/>
</dbReference>
<dbReference type="CDD" id="cd03344">
    <property type="entry name" value="GroEL"/>
    <property type="match status" value="1"/>
</dbReference>
<dbReference type="FunFam" id="3.50.7.10:FF:000001">
    <property type="entry name" value="60 kDa chaperonin"/>
    <property type="match status" value="1"/>
</dbReference>
<dbReference type="Gene3D" id="3.50.7.10">
    <property type="entry name" value="GroEL"/>
    <property type="match status" value="1"/>
</dbReference>
<dbReference type="Gene3D" id="1.10.560.10">
    <property type="entry name" value="GroEL-like equatorial domain"/>
    <property type="match status" value="1"/>
</dbReference>
<dbReference type="Gene3D" id="3.30.260.10">
    <property type="entry name" value="TCP-1-like chaperonin intermediate domain"/>
    <property type="match status" value="1"/>
</dbReference>
<dbReference type="HAMAP" id="MF_00600">
    <property type="entry name" value="CH60"/>
    <property type="match status" value="1"/>
</dbReference>
<dbReference type="InterPro" id="IPR018370">
    <property type="entry name" value="Chaperonin_Cpn60_CS"/>
</dbReference>
<dbReference type="InterPro" id="IPR001844">
    <property type="entry name" value="Cpn60/GroEL"/>
</dbReference>
<dbReference type="InterPro" id="IPR002423">
    <property type="entry name" value="Cpn60/GroEL/TCP-1"/>
</dbReference>
<dbReference type="InterPro" id="IPR027409">
    <property type="entry name" value="GroEL-like_apical_dom_sf"/>
</dbReference>
<dbReference type="InterPro" id="IPR027413">
    <property type="entry name" value="GROEL-like_equatorial_sf"/>
</dbReference>
<dbReference type="InterPro" id="IPR027410">
    <property type="entry name" value="TCP-1-like_intermed_sf"/>
</dbReference>
<dbReference type="NCBIfam" id="TIGR02348">
    <property type="entry name" value="GroEL"/>
    <property type="match status" value="1"/>
</dbReference>
<dbReference type="NCBIfam" id="NF000592">
    <property type="entry name" value="PRK00013.1"/>
    <property type="match status" value="1"/>
</dbReference>
<dbReference type="NCBIfam" id="NF009487">
    <property type="entry name" value="PRK12849.1"/>
    <property type="match status" value="1"/>
</dbReference>
<dbReference type="NCBIfam" id="NF009488">
    <property type="entry name" value="PRK12850.1"/>
    <property type="match status" value="1"/>
</dbReference>
<dbReference type="NCBIfam" id="NF009489">
    <property type="entry name" value="PRK12851.1"/>
    <property type="match status" value="1"/>
</dbReference>
<dbReference type="PANTHER" id="PTHR45633">
    <property type="entry name" value="60 KDA HEAT SHOCK PROTEIN, MITOCHONDRIAL"/>
    <property type="match status" value="1"/>
</dbReference>
<dbReference type="Pfam" id="PF00118">
    <property type="entry name" value="Cpn60_TCP1"/>
    <property type="match status" value="1"/>
</dbReference>
<dbReference type="PRINTS" id="PR00298">
    <property type="entry name" value="CHAPERONIN60"/>
</dbReference>
<dbReference type="SUPFAM" id="SSF52029">
    <property type="entry name" value="GroEL apical domain-like"/>
    <property type="match status" value="1"/>
</dbReference>
<dbReference type="SUPFAM" id="SSF48592">
    <property type="entry name" value="GroEL equatorial domain-like"/>
    <property type="match status" value="1"/>
</dbReference>
<dbReference type="SUPFAM" id="SSF54849">
    <property type="entry name" value="GroEL-intermediate domain like"/>
    <property type="match status" value="1"/>
</dbReference>
<dbReference type="PROSITE" id="PS00296">
    <property type="entry name" value="CHAPERONINS_CPN60"/>
    <property type="match status" value="1"/>
</dbReference>
<reference key="1">
    <citation type="journal article" date="2002" name="Wei Sheng Wu Xue Bao">
        <title>Amplification of bacterial heat shock protein 60 gene using inverse PCR method.</title>
        <authorList>
            <person name="Jian W."/>
            <person name="Dong X."/>
        </authorList>
    </citation>
    <scope>NUCLEOTIDE SEQUENCE [GENOMIC DNA]</scope>
</reference>
<reference key="2">
    <citation type="journal article" date="2009" name="J. Bacteriol.">
        <title>Comparison of the complete genome sequences of Bifidobacterium animalis subsp. lactis DSM 10140 and Bl-04.</title>
        <authorList>
            <person name="Barrangou R."/>
            <person name="Briczinski E.P."/>
            <person name="Traeger L.L."/>
            <person name="Loquasto J.R."/>
            <person name="Richards M."/>
            <person name="Horvath P."/>
            <person name="Coute-Monvoisin A.-C."/>
            <person name="Leyer G."/>
            <person name="Rendulic S."/>
            <person name="Steele J.L."/>
            <person name="Broadbent J.R."/>
            <person name="Oberg T."/>
            <person name="Dudley E.G."/>
            <person name="Schuster S."/>
            <person name="Romero D.A."/>
            <person name="Roberts R.F."/>
        </authorList>
    </citation>
    <scope>NUCLEOTIDE SEQUENCE [LARGE SCALE GENOMIC DNA]</scope>
    <source>
        <strain>DSM 10140 / CCUG 37979 / JCM 10602 / LMG 18314 / NRRL B-41405 / UR1</strain>
    </source>
</reference>
<evidence type="ECO:0000255" key="1">
    <source>
        <dbReference type="HAMAP-Rule" id="MF_00600"/>
    </source>
</evidence>
<evidence type="ECO:0000305" key="2"/>
<sequence>MAKIIEYDEEARQGMLAGLDKLADTVKVTLGPKGRNVVLDKTYGAPTITNDGVSIAKEIDLEDPFERIGAELVKEVAKRTDDVAGDGTTTATVLAQSLVHEGLKNVVAGSNPIALRRGIEKASDALVKQLVASAKPVETKEQIAATATISAGDPEVGEKIAEALDKVGQDGVVTVEDNNRFGLDLDFTEGMRFDKGYISPYFVTNAEDQTAVLDDPYILLTSSKVSSQQDVVHIAELVMKTGKPLLIVAEDVDGEALPTLILNNIRGTFKSCAVKAPGFGDRRKAMLQDMAILTGGQVVSEDLGLKLDSIDLSVFGTAKKVIVSKDETTIVSGGGSKEDVAARVAQIRAEIEKTDSDYDREKLQERLAKLAGGVAVIKVGAATEVEAKERKHRIEDAVRNAKAAIEEGLVPGGGVALVQAAEKVEKDFNLEGDEATGAAIVFSGIEAPIKQIAENAGLSGAVVIDKVRSLPEGEGFNAATDTYEDLMAAGVTDPVKVTRSALQNAASIAGLFLTTEAVVANKPEPAAAPAAGQDMGY</sequence>
<gene>
    <name evidence="1" type="primary">groEL</name>
    <name evidence="1" type="synonym">groL</name>
    <name type="synonym">hsp60</name>
    <name type="ordered locus">Balat_0656</name>
</gene>
<accession>Q93M78</accession>
<accession>C6AHY9</accession>
<comment type="function">
    <text evidence="1">Together with its co-chaperonin GroES, plays an essential role in assisting protein folding. The GroEL-GroES system forms a nano-cage that allows encapsulation of the non-native substrate proteins and provides a physical environment optimized to promote and accelerate protein folding.</text>
</comment>
<comment type="catalytic activity">
    <reaction evidence="1">
        <text>ATP + H2O + a folded polypeptide = ADP + phosphate + an unfolded polypeptide.</text>
        <dbReference type="EC" id="5.6.1.7"/>
    </reaction>
</comment>
<comment type="subunit">
    <text evidence="1">Forms a cylinder of 14 subunits composed of two heptameric rings stacked back-to-back. Interacts with the co-chaperonin GroES.</text>
</comment>
<comment type="subcellular location">
    <subcellularLocation>
        <location evidence="1">Cytoplasm</location>
    </subcellularLocation>
</comment>
<comment type="similarity">
    <text evidence="1">Belongs to the chaperonin (HSP60) family.</text>
</comment>